<sequence>MAKHVKVAVTGAAGQIGYALLFRLASGQAFGLDTTVDLHLLEIEPALPALKGVVMELEDCAFPLLRNMVVTSDPRVAFNDVNWALLVGAAPRKAGMERKDLLEKNGSIFAGQGKAINENAASDVRIFVVGNPCNTNCLIAMNNAPDIPKDRFYAMTRLDQNRAIGQLALKAGVDVPSVKNMIIWGNHSSTQYPDFYHATIDGKPATEVIRDKNWLLNDFISVIQQRGAAVIKARGASSAASAANAALDSVWSLINTTPADDNYSVALCAQGQYGVDEGLIFSFPCRTENGVVSVIEEIEHNEFGQQKLKETLDELREERDAVEALGLI</sequence>
<reference key="1">
    <citation type="journal article" date="2003" name="Proc. Natl. Acad. Sci. U.S.A.">
        <title>Complete genome sequence of the Q-fever pathogen, Coxiella burnetii.</title>
        <authorList>
            <person name="Seshadri R."/>
            <person name="Paulsen I.T."/>
            <person name="Eisen J.A."/>
            <person name="Read T.D."/>
            <person name="Nelson K.E."/>
            <person name="Nelson W.C."/>
            <person name="Ward N.L."/>
            <person name="Tettelin H."/>
            <person name="Davidsen T.M."/>
            <person name="Beanan M.J."/>
            <person name="DeBoy R.T."/>
            <person name="Daugherty S.C."/>
            <person name="Brinkac L.M."/>
            <person name="Madupu R."/>
            <person name="Dodson R.J."/>
            <person name="Khouri H.M."/>
            <person name="Lee K.H."/>
            <person name="Carty H.A."/>
            <person name="Scanlan D."/>
            <person name="Heinzen R.A."/>
            <person name="Thompson H.A."/>
            <person name="Samuel J.E."/>
            <person name="Fraser C.M."/>
            <person name="Heidelberg J.F."/>
        </authorList>
    </citation>
    <scope>NUCLEOTIDE SEQUENCE [LARGE SCALE GENOMIC DNA]</scope>
    <source>
        <strain>RSA 493 / Nine Mile phase I</strain>
    </source>
</reference>
<evidence type="ECO:0000255" key="1">
    <source>
        <dbReference type="HAMAP-Rule" id="MF_01517"/>
    </source>
</evidence>
<keyword id="KW-0520">NAD</keyword>
<keyword id="KW-0560">Oxidoreductase</keyword>
<keyword id="KW-1185">Reference proteome</keyword>
<keyword id="KW-0816">Tricarboxylic acid cycle</keyword>
<dbReference type="EC" id="1.1.1.37" evidence="1"/>
<dbReference type="EMBL" id="AE016828">
    <property type="protein sequence ID" value="AAO90750.1"/>
    <property type="molecule type" value="Genomic_DNA"/>
</dbReference>
<dbReference type="RefSeq" id="NP_820236.1">
    <property type="nucleotide sequence ID" value="NC_002971.4"/>
</dbReference>
<dbReference type="RefSeq" id="WP_010958098.1">
    <property type="nucleotide sequence ID" value="NC_002971.4"/>
</dbReference>
<dbReference type="SMR" id="Q83C87"/>
<dbReference type="STRING" id="227377.CBU_1241"/>
<dbReference type="DNASU" id="1209146"/>
<dbReference type="EnsemblBacteria" id="AAO90750">
    <property type="protein sequence ID" value="AAO90750"/>
    <property type="gene ID" value="CBU_1241"/>
</dbReference>
<dbReference type="GeneID" id="1209146"/>
<dbReference type="KEGG" id="cbu:CBU_1241"/>
<dbReference type="PATRIC" id="fig|227377.7.peg.1232"/>
<dbReference type="eggNOG" id="COG0039">
    <property type="taxonomic scope" value="Bacteria"/>
</dbReference>
<dbReference type="HOGENOM" id="CLU_040727_2_0_6"/>
<dbReference type="OrthoDB" id="9802969at2"/>
<dbReference type="Proteomes" id="UP000002671">
    <property type="component" value="Chromosome"/>
</dbReference>
<dbReference type="GO" id="GO:0030060">
    <property type="term" value="F:L-malate dehydrogenase (NAD+) activity"/>
    <property type="evidence" value="ECO:0000318"/>
    <property type="project" value="GO_Central"/>
</dbReference>
<dbReference type="GO" id="GO:0006108">
    <property type="term" value="P:malate metabolic process"/>
    <property type="evidence" value="ECO:0000318"/>
    <property type="project" value="GO_Central"/>
</dbReference>
<dbReference type="GO" id="GO:0006734">
    <property type="term" value="P:NADH metabolic process"/>
    <property type="evidence" value="ECO:0000318"/>
    <property type="project" value="GO_Central"/>
</dbReference>
<dbReference type="GO" id="GO:0006107">
    <property type="term" value="P:oxaloacetate metabolic process"/>
    <property type="evidence" value="ECO:0000318"/>
    <property type="project" value="GO_Central"/>
</dbReference>
<dbReference type="GO" id="GO:0006099">
    <property type="term" value="P:tricarboxylic acid cycle"/>
    <property type="evidence" value="ECO:0000318"/>
    <property type="project" value="GO_Central"/>
</dbReference>
<dbReference type="CDD" id="cd01338">
    <property type="entry name" value="MDH_chloroplast-like"/>
    <property type="match status" value="1"/>
</dbReference>
<dbReference type="FunFam" id="3.40.50.720:FF:000010">
    <property type="entry name" value="Malate dehydrogenase"/>
    <property type="match status" value="1"/>
</dbReference>
<dbReference type="FunFam" id="3.90.110.10:FF:000002">
    <property type="entry name" value="Malate dehydrogenase"/>
    <property type="match status" value="1"/>
</dbReference>
<dbReference type="Gene3D" id="3.90.110.10">
    <property type="entry name" value="Lactate dehydrogenase/glycoside hydrolase, family 4, C-terminal"/>
    <property type="match status" value="1"/>
</dbReference>
<dbReference type="Gene3D" id="3.40.50.720">
    <property type="entry name" value="NAD(P)-binding Rossmann-like Domain"/>
    <property type="match status" value="1"/>
</dbReference>
<dbReference type="HAMAP" id="MF_01517">
    <property type="entry name" value="Malate_dehydrog_2"/>
    <property type="match status" value="1"/>
</dbReference>
<dbReference type="InterPro" id="IPR001557">
    <property type="entry name" value="L-lactate/malate_DH"/>
</dbReference>
<dbReference type="InterPro" id="IPR022383">
    <property type="entry name" value="Lactate/malate_DH_C"/>
</dbReference>
<dbReference type="InterPro" id="IPR001236">
    <property type="entry name" value="Lactate/malate_DH_N"/>
</dbReference>
<dbReference type="InterPro" id="IPR015955">
    <property type="entry name" value="Lactate_DH/Glyco_Ohase_4_C"/>
</dbReference>
<dbReference type="InterPro" id="IPR001252">
    <property type="entry name" value="Malate_DH_AS"/>
</dbReference>
<dbReference type="InterPro" id="IPR010945">
    <property type="entry name" value="Malate_DH_type2"/>
</dbReference>
<dbReference type="InterPro" id="IPR036291">
    <property type="entry name" value="NAD(P)-bd_dom_sf"/>
</dbReference>
<dbReference type="NCBIfam" id="TIGR01759">
    <property type="entry name" value="MalateDH-SF1"/>
    <property type="match status" value="1"/>
</dbReference>
<dbReference type="NCBIfam" id="NF003916">
    <property type="entry name" value="PRK05442.1"/>
    <property type="match status" value="1"/>
</dbReference>
<dbReference type="PANTHER" id="PTHR23382">
    <property type="entry name" value="MALATE DEHYDROGENASE"/>
    <property type="match status" value="1"/>
</dbReference>
<dbReference type="Pfam" id="PF02866">
    <property type="entry name" value="Ldh_1_C"/>
    <property type="match status" value="1"/>
</dbReference>
<dbReference type="Pfam" id="PF00056">
    <property type="entry name" value="Ldh_1_N"/>
    <property type="match status" value="1"/>
</dbReference>
<dbReference type="PIRSF" id="PIRSF000102">
    <property type="entry name" value="Lac_mal_DH"/>
    <property type="match status" value="1"/>
</dbReference>
<dbReference type="SUPFAM" id="SSF56327">
    <property type="entry name" value="LDH C-terminal domain-like"/>
    <property type="match status" value="1"/>
</dbReference>
<dbReference type="SUPFAM" id="SSF51735">
    <property type="entry name" value="NAD(P)-binding Rossmann-fold domains"/>
    <property type="match status" value="1"/>
</dbReference>
<dbReference type="PROSITE" id="PS00068">
    <property type="entry name" value="MDH"/>
    <property type="match status" value="1"/>
</dbReference>
<proteinExistence type="inferred from homology"/>
<organism>
    <name type="scientific">Coxiella burnetii (strain RSA 493 / Nine Mile phase I)</name>
    <dbReference type="NCBI Taxonomy" id="227377"/>
    <lineage>
        <taxon>Bacteria</taxon>
        <taxon>Pseudomonadati</taxon>
        <taxon>Pseudomonadota</taxon>
        <taxon>Gammaproteobacteria</taxon>
        <taxon>Legionellales</taxon>
        <taxon>Coxiellaceae</taxon>
        <taxon>Coxiella</taxon>
    </lineage>
</organism>
<protein>
    <recommendedName>
        <fullName evidence="1">Malate dehydrogenase</fullName>
        <ecNumber evidence="1">1.1.1.37</ecNumber>
    </recommendedName>
</protein>
<name>MDH_COXBU</name>
<comment type="function">
    <text evidence="1">Catalyzes the reversible oxidation of malate to oxaloacetate.</text>
</comment>
<comment type="catalytic activity">
    <reaction evidence="1">
        <text>(S)-malate + NAD(+) = oxaloacetate + NADH + H(+)</text>
        <dbReference type="Rhea" id="RHEA:21432"/>
        <dbReference type="ChEBI" id="CHEBI:15378"/>
        <dbReference type="ChEBI" id="CHEBI:15589"/>
        <dbReference type="ChEBI" id="CHEBI:16452"/>
        <dbReference type="ChEBI" id="CHEBI:57540"/>
        <dbReference type="ChEBI" id="CHEBI:57945"/>
        <dbReference type="EC" id="1.1.1.37"/>
    </reaction>
</comment>
<comment type="similarity">
    <text evidence="1">Belongs to the LDH/MDH superfamily. MDH type 2 family.</text>
</comment>
<accession>Q83C87</accession>
<gene>
    <name evidence="1" type="primary">mdh</name>
    <name type="ordered locus">CBU_1241</name>
</gene>
<feature type="chain" id="PRO_0000113366" description="Malate dehydrogenase">
    <location>
        <begin position="1"/>
        <end position="328"/>
    </location>
</feature>
<feature type="active site" description="Proton acceptor" evidence="1">
    <location>
        <position position="187"/>
    </location>
</feature>
<feature type="binding site" evidence="1">
    <location>
        <begin position="11"/>
        <end position="17"/>
    </location>
    <ligand>
        <name>NAD(+)</name>
        <dbReference type="ChEBI" id="CHEBI:57540"/>
    </ligand>
</feature>
<feature type="binding site" evidence="1">
    <location>
        <position position="92"/>
    </location>
    <ligand>
        <name>substrate</name>
    </ligand>
</feature>
<feature type="binding site" evidence="1">
    <location>
        <position position="98"/>
    </location>
    <ligand>
        <name>substrate</name>
    </ligand>
</feature>
<feature type="binding site" evidence="1">
    <location>
        <position position="105"/>
    </location>
    <ligand>
        <name>NAD(+)</name>
        <dbReference type="ChEBI" id="CHEBI:57540"/>
    </ligand>
</feature>
<feature type="binding site" evidence="1">
    <location>
        <position position="112"/>
    </location>
    <ligand>
        <name>NAD(+)</name>
        <dbReference type="ChEBI" id="CHEBI:57540"/>
    </ligand>
</feature>
<feature type="binding site" evidence="1">
    <location>
        <begin position="129"/>
        <end position="131"/>
    </location>
    <ligand>
        <name>NAD(+)</name>
        <dbReference type="ChEBI" id="CHEBI:57540"/>
    </ligand>
</feature>
<feature type="binding site" evidence="1">
    <location>
        <position position="131"/>
    </location>
    <ligand>
        <name>substrate</name>
    </ligand>
</feature>
<feature type="binding site" evidence="1">
    <location>
        <position position="162"/>
    </location>
    <ligand>
        <name>substrate</name>
    </ligand>
</feature>